<sequence length="104" mass="11370">MFSTSDQVSKMNSRILSALLILGIATCVIAGGFCPKSRHPQCNLSYKINDCCAQSDCRVGSVCCVEGCGNVCRAESDTPLGEKFVDGSECKHGHVFPKKWYQFR</sequence>
<organism>
    <name type="scientific">Lycosa singoriensis</name>
    <name type="common">Wolf spider</name>
    <name type="synonym">Aranea singoriensis</name>
    <dbReference type="NCBI Taxonomy" id="434756"/>
    <lineage>
        <taxon>Eukaryota</taxon>
        <taxon>Metazoa</taxon>
        <taxon>Ecdysozoa</taxon>
        <taxon>Arthropoda</taxon>
        <taxon>Chelicerata</taxon>
        <taxon>Arachnida</taxon>
        <taxon>Araneae</taxon>
        <taxon>Araneomorphae</taxon>
        <taxon>Entelegynae</taxon>
        <taxon>Lycosoidea</taxon>
        <taxon>Lycosidae</taxon>
        <taxon>Lycosa</taxon>
    </lineage>
</organism>
<keyword id="KW-1015">Disulfide bond</keyword>
<keyword id="KW-0964">Secreted</keyword>
<keyword id="KW-0732">Signal</keyword>
<keyword id="KW-0800">Toxin</keyword>
<comment type="function">
    <text evidence="1">Has antibacterial activity.</text>
</comment>
<comment type="subcellular location">
    <subcellularLocation>
        <location evidence="1">Secreted</location>
    </subcellularLocation>
</comment>
<comment type="tissue specificity">
    <text>Expressed by the venom gland.</text>
</comment>
<comment type="PTM">
    <text evidence="3">Contains 5 disulfide bonds.</text>
</comment>
<comment type="similarity">
    <text evidence="3">Belongs to the venom protein 11 family. 02 (wap-2) subfamily.</text>
</comment>
<feature type="signal peptide" evidence="2">
    <location>
        <begin position="1"/>
        <end position="30"/>
    </location>
</feature>
<feature type="chain" id="PRO_0000401912" description="U20-lycotoxin-Ls1d">
    <location>
        <begin position="31"/>
        <end position="104"/>
    </location>
</feature>
<feature type="domain" description="WAP">
    <location>
        <begin position="31"/>
        <end position="76"/>
    </location>
</feature>
<feature type="disulfide bond" evidence="1">
    <location>
        <begin position="34"/>
        <end position="64"/>
    </location>
</feature>
<feature type="disulfide bond" evidence="1">
    <location>
        <begin position="42"/>
        <end position="68"/>
    </location>
</feature>
<feature type="disulfide bond" evidence="1">
    <location>
        <begin position="51"/>
        <end position="63"/>
    </location>
</feature>
<feature type="disulfide bond" evidence="3">
    <location>
        <begin position="52"/>
        <end position="90"/>
    </location>
</feature>
<feature type="disulfide bond" evidence="1">
    <location>
        <begin position="57"/>
        <end position="72"/>
    </location>
</feature>
<reference key="1">
    <citation type="journal article" date="2010" name="Zoology">
        <title>Transcriptome analysis of the venom glands of the Chinese wolf spider Lycosa singoriensis.</title>
        <authorList>
            <person name="Zhang Y."/>
            <person name="Chen J."/>
            <person name="Tang X."/>
            <person name="Wang F."/>
            <person name="Jiang L."/>
            <person name="Xiong X."/>
            <person name="Wang M."/>
            <person name="Rong M."/>
            <person name="Liu Z."/>
            <person name="Liang S."/>
        </authorList>
    </citation>
    <scope>NUCLEOTIDE SEQUENCE [LARGE SCALE MRNA]</scope>
    <source>
        <tissue>Venom</tissue>
        <tissue>Venom gland</tissue>
    </source>
</reference>
<name>TXK04_LYCSI</name>
<dbReference type="EMBL" id="EU926065">
    <property type="protein sequence ID" value="ACI41397.1"/>
    <property type="molecule type" value="mRNA"/>
</dbReference>
<dbReference type="EMBL" id="FM864069">
    <property type="protein sequence ID" value="CAS03666.1"/>
    <property type="molecule type" value="mRNA"/>
</dbReference>
<dbReference type="SMR" id="B6DCY1"/>
<dbReference type="ArachnoServer" id="AS001004">
    <property type="toxin name" value="U20-lycotoxin-Ls1d"/>
</dbReference>
<dbReference type="GO" id="GO:0005576">
    <property type="term" value="C:extracellular region"/>
    <property type="evidence" value="ECO:0007669"/>
    <property type="project" value="UniProtKB-SubCell"/>
</dbReference>
<dbReference type="GO" id="GO:0090729">
    <property type="term" value="F:toxin activity"/>
    <property type="evidence" value="ECO:0007669"/>
    <property type="project" value="UniProtKB-KW"/>
</dbReference>
<dbReference type="InterPro" id="IPR036645">
    <property type="entry name" value="Elafin-like_sf"/>
</dbReference>
<dbReference type="SUPFAM" id="SSF57256">
    <property type="entry name" value="Elafin-like"/>
    <property type="match status" value="1"/>
</dbReference>
<protein>
    <recommendedName>
        <fullName>U20-lycotoxin-Ls1d</fullName>
    </recommendedName>
    <alternativeName>
        <fullName>Toxin-like structure LSTX-Q4</fullName>
    </alternativeName>
</protein>
<accession>B6DCY1</accession>
<evidence type="ECO:0000250" key="1"/>
<evidence type="ECO:0000255" key="2"/>
<evidence type="ECO:0000305" key="3"/>
<proteinExistence type="evidence at transcript level"/>